<dbReference type="EMBL" id="CR936257">
    <property type="protein sequence ID" value="CAI48982.1"/>
    <property type="molecule type" value="Genomic_DNA"/>
</dbReference>
<dbReference type="RefSeq" id="WP_011322615.1">
    <property type="nucleotide sequence ID" value="NC_007426.1"/>
</dbReference>
<dbReference type="SMR" id="Q3ISA5"/>
<dbReference type="STRING" id="348780.NP_1782A"/>
<dbReference type="EnsemblBacteria" id="CAI48982">
    <property type="protein sequence ID" value="CAI48982"/>
    <property type="gene ID" value="NP_1782A"/>
</dbReference>
<dbReference type="GeneID" id="3703101"/>
<dbReference type="KEGG" id="nph:NP_1782A"/>
<dbReference type="eggNOG" id="arCOG00470">
    <property type="taxonomic scope" value="Archaea"/>
</dbReference>
<dbReference type="HOGENOM" id="CLU_027255_1_0_2"/>
<dbReference type="OrthoDB" id="8658at2157"/>
<dbReference type="Proteomes" id="UP000002698">
    <property type="component" value="Chromosome"/>
</dbReference>
<dbReference type="GO" id="GO:0005524">
    <property type="term" value="F:ATP binding"/>
    <property type="evidence" value="ECO:0007669"/>
    <property type="project" value="UniProtKB-UniRule"/>
</dbReference>
<dbReference type="GO" id="GO:0016887">
    <property type="term" value="F:ATP hydrolysis activity"/>
    <property type="evidence" value="ECO:0007669"/>
    <property type="project" value="InterPro"/>
</dbReference>
<dbReference type="GO" id="GO:0003689">
    <property type="term" value="F:DNA clamp loader activity"/>
    <property type="evidence" value="ECO:0007669"/>
    <property type="project" value="UniProtKB-UniRule"/>
</dbReference>
<dbReference type="GO" id="GO:0006260">
    <property type="term" value="P:DNA replication"/>
    <property type="evidence" value="ECO:0007669"/>
    <property type="project" value="UniProtKB-UniRule"/>
</dbReference>
<dbReference type="CDD" id="cd00009">
    <property type="entry name" value="AAA"/>
    <property type="match status" value="1"/>
</dbReference>
<dbReference type="CDD" id="cd18140">
    <property type="entry name" value="HLD_clamp_RFC"/>
    <property type="match status" value="1"/>
</dbReference>
<dbReference type="Gene3D" id="1.10.8.60">
    <property type="match status" value="1"/>
</dbReference>
<dbReference type="Gene3D" id="3.40.50.300">
    <property type="entry name" value="P-loop containing nucleotide triphosphate hydrolases"/>
    <property type="match status" value="1"/>
</dbReference>
<dbReference type="HAMAP" id="MF_01508">
    <property type="entry name" value="RfcL"/>
    <property type="match status" value="1"/>
</dbReference>
<dbReference type="InterPro" id="IPR003593">
    <property type="entry name" value="AAA+_ATPase"/>
</dbReference>
<dbReference type="InterPro" id="IPR003959">
    <property type="entry name" value="ATPase_AAA_core"/>
</dbReference>
<dbReference type="InterPro" id="IPR027417">
    <property type="entry name" value="P-loop_NTPase"/>
</dbReference>
<dbReference type="InterPro" id="IPR023935">
    <property type="entry name" value="Rep_factor-C_lsu"/>
</dbReference>
<dbReference type="InterPro" id="IPR047854">
    <property type="entry name" value="RFC_lid"/>
</dbReference>
<dbReference type="NCBIfam" id="NF003228">
    <property type="entry name" value="PRK04195.1-4"/>
    <property type="match status" value="1"/>
</dbReference>
<dbReference type="NCBIfam" id="NF003229">
    <property type="entry name" value="PRK04195.1-5"/>
    <property type="match status" value="1"/>
</dbReference>
<dbReference type="PANTHER" id="PTHR23389">
    <property type="entry name" value="CHROMOSOME TRANSMISSION FIDELITY FACTOR 18"/>
    <property type="match status" value="1"/>
</dbReference>
<dbReference type="PANTHER" id="PTHR23389:SF6">
    <property type="entry name" value="REPLICATION FACTOR C SUBUNIT 1"/>
    <property type="match status" value="1"/>
</dbReference>
<dbReference type="Pfam" id="PF00004">
    <property type="entry name" value="AAA"/>
    <property type="match status" value="1"/>
</dbReference>
<dbReference type="Pfam" id="PF21960">
    <property type="entry name" value="RCF1-5-like_lid"/>
    <property type="match status" value="1"/>
</dbReference>
<dbReference type="SMART" id="SM00382">
    <property type="entry name" value="AAA"/>
    <property type="match status" value="1"/>
</dbReference>
<dbReference type="SUPFAM" id="SSF52540">
    <property type="entry name" value="P-loop containing nucleoside triphosphate hydrolases"/>
    <property type="match status" value="1"/>
</dbReference>
<name>RFCL_NATPD</name>
<reference key="1">
    <citation type="journal article" date="2005" name="Genome Res.">
        <title>Living with two extremes: conclusions from the genome sequence of Natronomonas pharaonis.</title>
        <authorList>
            <person name="Falb M."/>
            <person name="Pfeiffer F."/>
            <person name="Palm P."/>
            <person name="Rodewald K."/>
            <person name="Hickmann V."/>
            <person name="Tittor J."/>
            <person name="Oesterhelt D."/>
        </authorList>
    </citation>
    <scope>NUCLEOTIDE SEQUENCE [LARGE SCALE GENOMIC DNA]</scope>
    <source>
        <strain>ATCC 35678 / DSM 2160 / CIP 103997 / JCM 8858 / NBRC 14720 / NCIMB 2260 / Gabara</strain>
    </source>
</reference>
<organism>
    <name type="scientific">Natronomonas pharaonis (strain ATCC 35678 / DSM 2160 / CIP 103997 / JCM 8858 / NBRC 14720 / NCIMB 2260 / Gabara)</name>
    <name type="common">Halobacterium pharaonis</name>
    <dbReference type="NCBI Taxonomy" id="348780"/>
    <lineage>
        <taxon>Archaea</taxon>
        <taxon>Methanobacteriati</taxon>
        <taxon>Methanobacteriota</taxon>
        <taxon>Stenosarchaea group</taxon>
        <taxon>Halobacteria</taxon>
        <taxon>Halobacteriales</taxon>
        <taxon>Haloarculaceae</taxon>
        <taxon>Natronomonas</taxon>
    </lineage>
</organism>
<sequence>MSDWTEAYRPTTLSEVRGNNKARDAFEEWAKAWEDHREAVILHGSPGVGKTSAAHALANDMGWPVLEMNASDARTKDEIERFAGRAASNATLGGGRQLIILDEADNLHQHKDRGGAAAMTRLVKDATQPVVLIANDYYEMSSGLRSACRDVEFRDVSARSIVPVLRDICRQENVEFDEDVLQEIAEANRGDLRGAVKDLQARERDGEIKPEGSEGSRDRTEDIFAFLDAVLKEESAEEALQTAYAVDETPDNLLQWIEDKVPKVYEGDELADAYEHLADADVWLGRVRATQNYSYWRYATDNVAAGVAAVRQEDRGGWTRYGGAPYRSSRDSTRDYIATRIAESAGVSTATARREILPYLSAMTHHCNNRELTVRMTARYELDAEHVAFITGSGKTTNKVQGIVEDAETRRETAAVDHGGGIFAPAVDDAQSDTESDDDDDGDTLAAFGADEPKEESVNREQSDGTADAEESDDGQAGLSDFM</sequence>
<gene>
    <name evidence="1" type="primary">rfcL</name>
    <name type="synonym">rfcB</name>
    <name type="ordered locus">NP_1782A</name>
</gene>
<feature type="chain" id="PRO_0000135958" description="Replication factor C large subunit">
    <location>
        <begin position="1"/>
        <end position="483"/>
    </location>
</feature>
<feature type="region of interest" description="Disordered" evidence="2">
    <location>
        <begin position="415"/>
        <end position="483"/>
    </location>
</feature>
<feature type="compositionally biased region" description="Acidic residues" evidence="2">
    <location>
        <begin position="430"/>
        <end position="443"/>
    </location>
</feature>
<feature type="compositionally biased region" description="Basic and acidic residues" evidence="2">
    <location>
        <begin position="451"/>
        <end position="463"/>
    </location>
</feature>
<feature type="binding site" evidence="1">
    <location>
        <begin position="44"/>
        <end position="51"/>
    </location>
    <ligand>
        <name>ATP</name>
        <dbReference type="ChEBI" id="CHEBI:30616"/>
    </ligand>
</feature>
<comment type="function">
    <text evidence="1">Part of the RFC clamp loader complex which loads the PCNA sliding clamp onto DNA.</text>
</comment>
<comment type="subunit">
    <text evidence="1">Heteromultimer composed of small subunits (RfcS) and large subunits (RfcL).</text>
</comment>
<comment type="similarity">
    <text evidence="1">Belongs to the activator 1 small subunits family. RfcL subfamily.</text>
</comment>
<accession>Q3ISA5</accession>
<keyword id="KW-0067">ATP-binding</keyword>
<keyword id="KW-0235">DNA replication</keyword>
<keyword id="KW-0547">Nucleotide-binding</keyword>
<keyword id="KW-1185">Reference proteome</keyword>
<proteinExistence type="inferred from homology"/>
<protein>
    <recommendedName>
        <fullName evidence="1">Replication factor C large subunit</fullName>
        <shortName evidence="1">RFC large subunit</shortName>
    </recommendedName>
    <alternativeName>
        <fullName evidence="1">Clamp loader large subunit</fullName>
    </alternativeName>
</protein>
<evidence type="ECO:0000255" key="1">
    <source>
        <dbReference type="HAMAP-Rule" id="MF_01508"/>
    </source>
</evidence>
<evidence type="ECO:0000256" key="2">
    <source>
        <dbReference type="SAM" id="MobiDB-lite"/>
    </source>
</evidence>